<feature type="initiator methionine" description="Removed; by host" evidence="1">
    <location>
        <position position="1"/>
    </location>
</feature>
<feature type="chain" id="PRO_0000144940" description="Capsid protein">
    <location>
        <begin position="2"/>
        <end position="157"/>
    </location>
</feature>
<feature type="modified residue" description="N-acetylalanine; by host" evidence="1">
    <location>
        <position position="2"/>
    </location>
</feature>
<comment type="function">
    <text>Capsid protein self-assembles to form rod-shaped virions about 18 nm in diameter with a central canal enclosing the viral genomic RNA.</text>
</comment>
<comment type="subcellular location">
    <subcellularLocation>
        <location evidence="2">Virion</location>
    </subcellularLocation>
</comment>
<comment type="similarity">
    <text evidence="2">Belongs to the virgaviridae capsid protein family.</text>
</comment>
<proteinExistence type="evidence at transcript level"/>
<organismHost>
    <name type="scientific">Capsicum</name>
    <name type="common">peppers</name>
    <dbReference type="NCBI Taxonomy" id="4071"/>
</organismHost>
<keyword id="KW-0007">Acetylation</keyword>
<keyword id="KW-0167">Capsid protein</keyword>
<keyword id="KW-1139">Helical capsid protein</keyword>
<keyword id="KW-0946">Virion</keyword>
<dbReference type="EMBL" id="AF103778">
    <property type="protein sequence ID" value="AAD20289.1"/>
    <property type="molecule type" value="mRNA"/>
</dbReference>
<dbReference type="SMR" id="Q9WDG5"/>
<dbReference type="GO" id="GO:0019029">
    <property type="term" value="C:helical viral capsid"/>
    <property type="evidence" value="ECO:0007669"/>
    <property type="project" value="UniProtKB-KW"/>
</dbReference>
<dbReference type="GO" id="GO:0005198">
    <property type="term" value="F:structural molecule activity"/>
    <property type="evidence" value="ECO:0007669"/>
    <property type="project" value="InterPro"/>
</dbReference>
<dbReference type="Gene3D" id="1.20.120.70">
    <property type="entry name" value="Tobacco mosaic virus-like, coat protein"/>
    <property type="match status" value="1"/>
</dbReference>
<dbReference type="InterPro" id="IPR001337">
    <property type="entry name" value="TMV-like_coat"/>
</dbReference>
<dbReference type="InterPro" id="IPR036417">
    <property type="entry name" value="TMV-like_coat_sf"/>
</dbReference>
<dbReference type="Pfam" id="PF00721">
    <property type="entry name" value="TMV_coat"/>
    <property type="match status" value="1"/>
</dbReference>
<dbReference type="SUPFAM" id="SSF47195">
    <property type="entry name" value="TMV-like viral coat proteins"/>
    <property type="match status" value="1"/>
</dbReference>
<gene>
    <name type="primary">CP</name>
</gene>
<organism>
    <name type="scientific">Pepper mild mottle virus (strain P2)</name>
    <name type="common">PMMV</name>
    <dbReference type="NCBI Taxonomy" id="138305"/>
    <lineage>
        <taxon>Viruses</taxon>
        <taxon>Riboviria</taxon>
        <taxon>Orthornavirae</taxon>
        <taxon>Kitrinoviricota</taxon>
        <taxon>Alsuviricetes</taxon>
        <taxon>Martellivirales</taxon>
        <taxon>Virgaviridae</taxon>
        <taxon>Tobamovirus</taxon>
        <taxon>Pepper mild mottle virus</taxon>
    </lineage>
</organism>
<sequence>MAYTVSSANQLVYLGSVWADPLELQNLCTSALGNQFQTQQARTTVQQQFSDVWKTIPTATVRFPATGFKRFRYNAVLDSLVSALLGAFDTRNRIIEVENPQNPTTAETLDATMRVDDATVAIRASISPIMNELVRGTGMYNQALFESASGLTWATTP</sequence>
<protein>
    <recommendedName>
        <fullName>Capsid protein</fullName>
    </recommendedName>
    <alternativeName>
        <fullName>Coat protein</fullName>
    </alternativeName>
</protein>
<reference key="1">
    <citation type="submission" date="1998-11" db="EMBL/GenBank/DDBJ databases">
        <title>The coat protein gene of pepper mild mottle virus isolated from hot pepper in Korea.</title>
        <authorList>
            <person name="Sohn S.-H."/>
            <person name="Hahn J.-H."/>
            <person name="Hwang Y.-S."/>
        </authorList>
    </citation>
    <scope>NUCLEOTIDE SEQUENCE [MRNA]</scope>
</reference>
<name>CAPSD_PMMV2</name>
<evidence type="ECO:0000250" key="1"/>
<evidence type="ECO:0000305" key="2"/>
<accession>Q9WDG5</accession>